<name>Y1542_FRATN</name>
<evidence type="ECO:0000255" key="1">
    <source>
        <dbReference type="HAMAP-Rule" id="MF_00652"/>
    </source>
</evidence>
<reference key="1">
    <citation type="journal article" date="2007" name="Genome Biol.">
        <title>Comparison of Francisella tularensis genomes reveals evolutionary events associated with the emergence of human pathogenic strains.</title>
        <authorList>
            <person name="Rohmer L."/>
            <person name="Fong C."/>
            <person name="Abmayr S."/>
            <person name="Wasnick M."/>
            <person name="Larson Freeman T.J."/>
            <person name="Radey M."/>
            <person name="Guina T."/>
            <person name="Svensson K."/>
            <person name="Hayden H.S."/>
            <person name="Jacobs M."/>
            <person name="Gallagher L.A."/>
            <person name="Manoil C."/>
            <person name="Ernst R.K."/>
            <person name="Drees B."/>
            <person name="Buckley D."/>
            <person name="Haugen E."/>
            <person name="Bovee D."/>
            <person name="Zhou Y."/>
            <person name="Chang J."/>
            <person name="Levy R."/>
            <person name="Lim R."/>
            <person name="Gillett W."/>
            <person name="Guenthener D."/>
            <person name="Kang A."/>
            <person name="Shaffer S.A."/>
            <person name="Taylor G."/>
            <person name="Chen J."/>
            <person name="Gallis B."/>
            <person name="D'Argenio D.A."/>
            <person name="Forsman M."/>
            <person name="Olson M.V."/>
            <person name="Goodlett D.R."/>
            <person name="Kaul R."/>
            <person name="Miller S.I."/>
            <person name="Brittnacher M.J."/>
        </authorList>
    </citation>
    <scope>NUCLEOTIDE SEQUENCE [LARGE SCALE GENOMIC DNA]</scope>
    <source>
        <strain>U112</strain>
    </source>
</reference>
<dbReference type="EMBL" id="CP000439">
    <property type="protein sequence ID" value="ABK90406.1"/>
    <property type="molecule type" value="Genomic_DNA"/>
</dbReference>
<dbReference type="SMR" id="A0Q841"/>
<dbReference type="KEGG" id="ftn:FTN_1542"/>
<dbReference type="KEGG" id="ftx:AW25_456"/>
<dbReference type="BioCyc" id="FTUL401614:G1G75-1594-MONOMER"/>
<dbReference type="Proteomes" id="UP000000762">
    <property type="component" value="Chromosome"/>
</dbReference>
<dbReference type="GO" id="GO:0005829">
    <property type="term" value="C:cytosol"/>
    <property type="evidence" value="ECO:0007669"/>
    <property type="project" value="TreeGrafter"/>
</dbReference>
<dbReference type="GO" id="GO:0033194">
    <property type="term" value="P:response to hydroperoxide"/>
    <property type="evidence" value="ECO:0007669"/>
    <property type="project" value="TreeGrafter"/>
</dbReference>
<dbReference type="HAMAP" id="MF_00652">
    <property type="entry name" value="UPF0246"/>
    <property type="match status" value="1"/>
</dbReference>
<dbReference type="InterPro" id="IPR005583">
    <property type="entry name" value="YaaA"/>
</dbReference>
<dbReference type="NCBIfam" id="NF002542">
    <property type="entry name" value="PRK02101.1-3"/>
    <property type="match status" value="1"/>
</dbReference>
<dbReference type="PANTHER" id="PTHR30283:SF4">
    <property type="entry name" value="PEROXIDE STRESS RESISTANCE PROTEIN YAAA"/>
    <property type="match status" value="1"/>
</dbReference>
<dbReference type="PANTHER" id="PTHR30283">
    <property type="entry name" value="PEROXIDE STRESS RESPONSE PROTEIN YAAA"/>
    <property type="match status" value="1"/>
</dbReference>
<dbReference type="Pfam" id="PF03883">
    <property type="entry name" value="H2O2_YaaD"/>
    <property type="match status" value="1"/>
</dbReference>
<accession>A0Q841</accession>
<proteinExistence type="inferred from homology"/>
<organism>
    <name type="scientific">Francisella tularensis subsp. novicida (strain U112)</name>
    <dbReference type="NCBI Taxonomy" id="401614"/>
    <lineage>
        <taxon>Bacteria</taxon>
        <taxon>Pseudomonadati</taxon>
        <taxon>Pseudomonadota</taxon>
        <taxon>Gammaproteobacteria</taxon>
        <taxon>Thiotrichales</taxon>
        <taxon>Francisellaceae</taxon>
        <taxon>Francisella</taxon>
    </lineage>
</organism>
<protein>
    <recommendedName>
        <fullName evidence="1">UPF0246 protein FTN_1542</fullName>
    </recommendedName>
</protein>
<gene>
    <name type="ordered locus">FTN_1542</name>
</gene>
<feature type="chain" id="PRO_1000061603" description="UPF0246 protein FTN_1542">
    <location>
        <begin position="1"/>
        <end position="254"/>
    </location>
</feature>
<comment type="similarity">
    <text evidence="1">Belongs to the UPF0246 family.</text>
</comment>
<sequence length="254" mass="29376">MIIVISPAKSQNFEPIKTDYQFTQPIFKQQIIKLINTLKHYEVEEIEKLMKISPKLAEEVFAKHNSFNPNKYDNSNAKAAIFTFSGDVYKGLEADTLDNKTIEYAQNHLLMLSGLYGLVRPLDLIQAYRLEMGTNIKIDGKILHKYWQDKITTQLNEYFSQQQNKILINLASNEYSQAIDKKSLAAKWLDIDFKENKAGAYKTIGIHAKKARGLMTRYILENRIENVSDIKKFNVAGYQFNPDFSDENLLCFTR</sequence>